<organism>
    <name type="scientific">Macaca fascicularis</name>
    <name type="common">Crab-eating macaque</name>
    <name type="synonym">Cynomolgus monkey</name>
    <dbReference type="NCBI Taxonomy" id="9541"/>
    <lineage>
        <taxon>Eukaryota</taxon>
        <taxon>Metazoa</taxon>
        <taxon>Chordata</taxon>
        <taxon>Craniata</taxon>
        <taxon>Vertebrata</taxon>
        <taxon>Euteleostomi</taxon>
        <taxon>Mammalia</taxon>
        <taxon>Eutheria</taxon>
        <taxon>Euarchontoglires</taxon>
        <taxon>Primates</taxon>
        <taxon>Haplorrhini</taxon>
        <taxon>Catarrhini</taxon>
        <taxon>Cercopithecidae</taxon>
        <taxon>Cercopithecinae</taxon>
        <taxon>Macaca</taxon>
    </lineage>
</organism>
<gene>
    <name type="primary">HSPA14</name>
    <name type="ORF">QtsA-17902</name>
</gene>
<feature type="chain" id="PRO_0000405824" description="Heat shock 70 kDa protein 14">
    <location>
        <begin position="1"/>
        <end position="509"/>
    </location>
</feature>
<protein>
    <recommendedName>
        <fullName>Heat shock 70 kDa protein 14</fullName>
    </recommendedName>
</protein>
<dbReference type="EMBL" id="AB169191">
    <property type="protein sequence ID" value="BAE01283.1"/>
    <property type="molecule type" value="mRNA"/>
</dbReference>
<dbReference type="RefSeq" id="NP_001271024.1">
    <property type="nucleotide sequence ID" value="NM_001284095.1"/>
</dbReference>
<dbReference type="RefSeq" id="XP_045255539.2">
    <property type="nucleotide sequence ID" value="XM_045399604.2"/>
</dbReference>
<dbReference type="SMR" id="Q4R6J2"/>
<dbReference type="STRING" id="9541.ENSMFAP00000025221"/>
<dbReference type="Ensembl" id="ENSMFAT00000083635.1">
    <property type="protein sequence ID" value="ENSMFAP00000050740.1"/>
    <property type="gene ID" value="ENSMFAG00000044126.2"/>
</dbReference>
<dbReference type="GeneID" id="101865350"/>
<dbReference type="VEuPathDB" id="HostDB:ENSMFAG00000044126"/>
<dbReference type="eggNOG" id="KOG0101">
    <property type="taxonomic scope" value="Eukaryota"/>
</dbReference>
<dbReference type="GeneTree" id="ENSGT00940000156380"/>
<dbReference type="OMA" id="GSTCACA"/>
<dbReference type="Proteomes" id="UP000233100">
    <property type="component" value="Chromosome 9"/>
</dbReference>
<dbReference type="Bgee" id="ENSMFAG00000044126">
    <property type="expression patterns" value="Expressed in thymus and 13 other cell types or tissues"/>
</dbReference>
<dbReference type="GO" id="GO:0005829">
    <property type="term" value="C:cytosol"/>
    <property type="evidence" value="ECO:0000250"/>
    <property type="project" value="UniProtKB"/>
</dbReference>
<dbReference type="GO" id="GO:0005840">
    <property type="term" value="C:ribosome"/>
    <property type="evidence" value="ECO:0007669"/>
    <property type="project" value="Ensembl"/>
</dbReference>
<dbReference type="GO" id="GO:0005524">
    <property type="term" value="F:ATP binding"/>
    <property type="evidence" value="ECO:0007669"/>
    <property type="project" value="UniProtKB-KW"/>
</dbReference>
<dbReference type="GO" id="GO:0140662">
    <property type="term" value="F:ATP-dependent protein folding chaperone"/>
    <property type="evidence" value="ECO:0007669"/>
    <property type="project" value="InterPro"/>
</dbReference>
<dbReference type="CDD" id="cd10238">
    <property type="entry name" value="ASKHA_NBD_HSP70_HSPA14"/>
    <property type="match status" value="1"/>
</dbReference>
<dbReference type="FunFam" id="2.60.34.10:FF:000013">
    <property type="entry name" value="Heat shock 70 kDa protein 14"/>
    <property type="match status" value="1"/>
</dbReference>
<dbReference type="FunFam" id="3.30.30.30:FF:000008">
    <property type="entry name" value="heat shock 70 kDa protein 14"/>
    <property type="match status" value="1"/>
</dbReference>
<dbReference type="FunFam" id="3.90.640.10:FF:000010">
    <property type="entry name" value="heat shock 70 kDa protein 14"/>
    <property type="match status" value="1"/>
</dbReference>
<dbReference type="FunFam" id="3.30.420.40:FF:000171">
    <property type="entry name" value="Heat shock 70 kDa protein 4"/>
    <property type="match status" value="1"/>
</dbReference>
<dbReference type="FunFam" id="3.30.420.40:FF:000433">
    <property type="entry name" value="Heat shock protein family A (Hsp70) member 14"/>
    <property type="match status" value="1"/>
</dbReference>
<dbReference type="Gene3D" id="3.30.30.30">
    <property type="match status" value="1"/>
</dbReference>
<dbReference type="Gene3D" id="3.30.420.40">
    <property type="match status" value="2"/>
</dbReference>
<dbReference type="Gene3D" id="3.90.640.10">
    <property type="entry name" value="Actin, Chain A, domain 4"/>
    <property type="match status" value="1"/>
</dbReference>
<dbReference type="Gene3D" id="2.60.34.10">
    <property type="entry name" value="Substrate Binding Domain Of DNAk, Chain A, domain 1"/>
    <property type="match status" value="1"/>
</dbReference>
<dbReference type="InterPro" id="IPR043129">
    <property type="entry name" value="ATPase_NBD"/>
</dbReference>
<dbReference type="InterPro" id="IPR018181">
    <property type="entry name" value="Heat_shock_70_CS"/>
</dbReference>
<dbReference type="InterPro" id="IPR029047">
    <property type="entry name" value="HSP70_peptide-bd_sf"/>
</dbReference>
<dbReference type="InterPro" id="IPR013126">
    <property type="entry name" value="Hsp_70_fam"/>
</dbReference>
<dbReference type="InterPro" id="IPR042049">
    <property type="entry name" value="HSPA14_NBD"/>
</dbReference>
<dbReference type="PANTHER" id="PTHR19375">
    <property type="entry name" value="HEAT SHOCK PROTEIN 70KDA"/>
    <property type="match status" value="1"/>
</dbReference>
<dbReference type="Pfam" id="PF00012">
    <property type="entry name" value="HSP70"/>
    <property type="match status" value="1"/>
</dbReference>
<dbReference type="PRINTS" id="PR00301">
    <property type="entry name" value="HEATSHOCK70"/>
</dbReference>
<dbReference type="SUPFAM" id="SSF53067">
    <property type="entry name" value="Actin-like ATPase domain"/>
    <property type="match status" value="2"/>
</dbReference>
<dbReference type="SUPFAM" id="SSF100920">
    <property type="entry name" value="Heat shock protein 70kD (HSP70), peptide-binding domain"/>
    <property type="match status" value="1"/>
</dbReference>
<dbReference type="PROSITE" id="PS01036">
    <property type="entry name" value="HSP70_3"/>
    <property type="match status" value="1"/>
</dbReference>
<accession>Q4R6J2</accession>
<name>HSP7E_MACFA</name>
<evidence type="ECO:0000250" key="1"/>
<evidence type="ECO:0000305" key="2"/>
<keyword id="KW-0067">ATP-binding</keyword>
<keyword id="KW-0143">Chaperone</keyword>
<keyword id="KW-0963">Cytoplasm</keyword>
<keyword id="KW-0547">Nucleotide-binding</keyword>
<keyword id="KW-1185">Reference proteome</keyword>
<proteinExistence type="evidence at transcript level"/>
<comment type="function">
    <text evidence="1">Component of the ribosome-associated complex (RAC), a complex involved in folding or maintaining nascent polypeptides in a folding-competent state. In the RAC complex, binds to the nascent polypeptide chain, while DNAJC2 stimulates its ATPase activity (By similarity).</text>
</comment>
<comment type="subunit">
    <text evidence="1">Component of ribosome-associated complex (RAC), a heterodimer composed of Hsp70/DnaK-type chaperone HSPA14 and Hsp40/DnaJ-type chaperone DNAJC2.</text>
</comment>
<comment type="subcellular location">
    <subcellularLocation>
        <location evidence="1">Cytoplasm</location>
        <location evidence="1">Cytosol</location>
    </subcellularLocation>
</comment>
<comment type="similarity">
    <text evidence="2">Belongs to the heat shock protein 70 family.</text>
</comment>
<reference key="1">
    <citation type="submission" date="2005-06" db="EMBL/GenBank/DDBJ databases">
        <title>DNA sequences of macaque genes expressed in brain or testis and its evolutionary implications.</title>
        <authorList>
            <consortium name="International consortium for macaque cDNA sequencing and analysis"/>
        </authorList>
    </citation>
    <scope>NUCLEOTIDE SEQUENCE [LARGE SCALE MRNA]</scope>
    <source>
        <tissue>Testis</tissue>
    </source>
</reference>
<sequence length="509" mass="54882">MAAIGVHLGCTSACVAVYKDGRAGVVANDAGDRVTPAVVAYSENEEIVGLAAKQSRIRNISNTVMKVKQILGRSSNDPQAQKYITESKCLVIEKNGKLRYEIDTGEETRFVNPEDVVRLIFSKMKETAHSVLGSDANDVVITVPFDFGEKQKNALGEAARAAGFNVLRLIHEPSAALLAYGIGQDSPNGKSNILVFKLGGTSLSLSVMEVNSGIYRVLSTNTDDNIGGAHFTETLAQYLASEFQRSFKHDVKGNARAMMKLMNSAEVAKHSLSTLGSANCFLDSLYEGQDFDCNVSRARFELLCSPLFNKCIEAIRGLLDQSGFTADDINKVVLCGGSSRIPKLQQLIKDLFPAVELLNSIPPDEVIPIGAAIEAGILIGKENLLVEDSLMIECSARDILVKGVDESGASRFTVLFPSGTPLPARRQHTLQAPGSISSVCLELYESDGKNSAKEETKFAQVVLQDLDKKENGLRDILAVLTMKRDGSLHVTCTDQETGKCEAISIEVAS</sequence>